<feature type="chain" id="PRO_0000358208" description="NAD(P)H-quinone oxidoreductase subunit J">
    <location>
        <begin position="1"/>
        <end position="188"/>
    </location>
</feature>
<feature type="region of interest" description="Disordered" evidence="2">
    <location>
        <begin position="1"/>
        <end position="23"/>
    </location>
</feature>
<feature type="compositionally biased region" description="Polar residues" evidence="2">
    <location>
        <begin position="1"/>
        <end position="12"/>
    </location>
</feature>
<name>NDHJ_SYNSC</name>
<sequence length="188" mass="21119">MSETPSKQTAASDETGAVVAPEPGPVSQWLNKQGFDHNILEPDHLGVEQIGVDAAVLPMIAAALKSNGFDYLQCQGGYDEGPGEQLVCFYHLLAMAEQVEAMVADPSAKLREVRIKVFLNREGTPSLPSIYGLFRGADWQERETFDMYGIQFEGHPHPKRLLMPEDWKGWPLRKDYVQPDFYEMQDAY</sequence>
<comment type="function">
    <text evidence="1">NDH-1 shuttles electrons from an unknown electron donor, via FMN and iron-sulfur (Fe-S) centers, to quinones in the respiratory and/or the photosynthetic chain. The immediate electron acceptor for the enzyme in this species is believed to be plastoquinone. Couples the redox reaction to proton translocation, and thus conserves the redox energy in a proton gradient. Cyanobacterial NDH-1 also plays a role in inorganic carbon-concentration.</text>
</comment>
<comment type="catalytic activity">
    <reaction evidence="1">
        <text>a plastoquinone + NADH + (n+1) H(+)(in) = a plastoquinol + NAD(+) + n H(+)(out)</text>
        <dbReference type="Rhea" id="RHEA:42608"/>
        <dbReference type="Rhea" id="RHEA-COMP:9561"/>
        <dbReference type="Rhea" id="RHEA-COMP:9562"/>
        <dbReference type="ChEBI" id="CHEBI:15378"/>
        <dbReference type="ChEBI" id="CHEBI:17757"/>
        <dbReference type="ChEBI" id="CHEBI:57540"/>
        <dbReference type="ChEBI" id="CHEBI:57945"/>
        <dbReference type="ChEBI" id="CHEBI:62192"/>
    </reaction>
</comment>
<comment type="catalytic activity">
    <reaction evidence="1">
        <text>a plastoquinone + NADPH + (n+1) H(+)(in) = a plastoquinol + NADP(+) + n H(+)(out)</text>
        <dbReference type="Rhea" id="RHEA:42612"/>
        <dbReference type="Rhea" id="RHEA-COMP:9561"/>
        <dbReference type="Rhea" id="RHEA-COMP:9562"/>
        <dbReference type="ChEBI" id="CHEBI:15378"/>
        <dbReference type="ChEBI" id="CHEBI:17757"/>
        <dbReference type="ChEBI" id="CHEBI:57783"/>
        <dbReference type="ChEBI" id="CHEBI:58349"/>
        <dbReference type="ChEBI" id="CHEBI:62192"/>
    </reaction>
</comment>
<comment type="subunit">
    <text evidence="1">NDH-1 can be composed of about 15 different subunits; different subcomplexes with different compositions have been identified which probably have different functions.</text>
</comment>
<comment type="subcellular location">
    <subcellularLocation>
        <location evidence="1">Cellular thylakoid membrane</location>
        <topology evidence="1">Peripheral membrane protein</topology>
        <orientation evidence="1">Cytoplasmic side</orientation>
    </subcellularLocation>
</comment>
<comment type="similarity">
    <text evidence="1">Belongs to the complex I 30 kDa subunit family.</text>
</comment>
<keyword id="KW-0472">Membrane</keyword>
<keyword id="KW-0520">NAD</keyword>
<keyword id="KW-0521">NADP</keyword>
<keyword id="KW-0618">Plastoquinone</keyword>
<keyword id="KW-0874">Quinone</keyword>
<keyword id="KW-0793">Thylakoid</keyword>
<keyword id="KW-1278">Translocase</keyword>
<keyword id="KW-0813">Transport</keyword>
<organism>
    <name type="scientific">Synechococcus sp. (strain CC9605)</name>
    <dbReference type="NCBI Taxonomy" id="110662"/>
    <lineage>
        <taxon>Bacteria</taxon>
        <taxon>Bacillati</taxon>
        <taxon>Cyanobacteriota</taxon>
        <taxon>Cyanophyceae</taxon>
        <taxon>Synechococcales</taxon>
        <taxon>Synechococcaceae</taxon>
        <taxon>Synechococcus</taxon>
    </lineage>
</organism>
<evidence type="ECO:0000255" key="1">
    <source>
        <dbReference type="HAMAP-Rule" id="MF_01357"/>
    </source>
</evidence>
<evidence type="ECO:0000256" key="2">
    <source>
        <dbReference type="SAM" id="MobiDB-lite"/>
    </source>
</evidence>
<protein>
    <recommendedName>
        <fullName evidence="1">NAD(P)H-quinone oxidoreductase subunit J</fullName>
        <ecNumber evidence="1">7.1.1.-</ecNumber>
    </recommendedName>
    <alternativeName>
        <fullName>NAD(P)H dehydrogenase subunit J</fullName>
    </alternativeName>
    <alternativeName>
        <fullName evidence="1">NADH-plastoquinone oxidoreductase subunit J</fullName>
    </alternativeName>
    <alternativeName>
        <fullName evidence="1">NDH-1 subunit J</fullName>
        <shortName evidence="1">NDH-J</shortName>
    </alternativeName>
</protein>
<dbReference type="EC" id="7.1.1.-" evidence="1"/>
<dbReference type="EMBL" id="CP000110">
    <property type="protein sequence ID" value="ABB33981.1"/>
    <property type="molecule type" value="Genomic_DNA"/>
</dbReference>
<dbReference type="RefSeq" id="WP_011363236.1">
    <property type="nucleotide sequence ID" value="NC_007516.1"/>
</dbReference>
<dbReference type="SMR" id="Q3AN51"/>
<dbReference type="STRING" id="110662.Syncc9605_0205"/>
<dbReference type="KEGG" id="syd:Syncc9605_0205"/>
<dbReference type="eggNOG" id="COG0852">
    <property type="taxonomic scope" value="Bacteria"/>
</dbReference>
<dbReference type="HOGENOM" id="CLU_042628_9_1_3"/>
<dbReference type="OrthoDB" id="9803286at2"/>
<dbReference type="GO" id="GO:0031676">
    <property type="term" value="C:plasma membrane-derived thylakoid membrane"/>
    <property type="evidence" value="ECO:0007669"/>
    <property type="project" value="UniProtKB-SubCell"/>
</dbReference>
<dbReference type="GO" id="GO:0008137">
    <property type="term" value="F:NADH dehydrogenase (ubiquinone) activity"/>
    <property type="evidence" value="ECO:0007669"/>
    <property type="project" value="InterPro"/>
</dbReference>
<dbReference type="GO" id="GO:0048038">
    <property type="term" value="F:quinone binding"/>
    <property type="evidence" value="ECO:0007669"/>
    <property type="project" value="UniProtKB-KW"/>
</dbReference>
<dbReference type="GO" id="GO:0019684">
    <property type="term" value="P:photosynthesis, light reaction"/>
    <property type="evidence" value="ECO:0007669"/>
    <property type="project" value="UniProtKB-UniRule"/>
</dbReference>
<dbReference type="Gene3D" id="3.30.460.80">
    <property type="entry name" value="NADH:ubiquinone oxidoreductase, 30kDa subunit"/>
    <property type="match status" value="1"/>
</dbReference>
<dbReference type="HAMAP" id="MF_01357">
    <property type="entry name" value="NDH1_NuoC"/>
    <property type="match status" value="1"/>
</dbReference>
<dbReference type="InterPro" id="IPR010218">
    <property type="entry name" value="NADH_DH_suC"/>
</dbReference>
<dbReference type="InterPro" id="IPR037232">
    <property type="entry name" value="NADH_quin_OxRdtase_su_C/D-like"/>
</dbReference>
<dbReference type="InterPro" id="IPR001268">
    <property type="entry name" value="NADH_UbQ_OxRdtase_30kDa_su"/>
</dbReference>
<dbReference type="InterPro" id="IPR020396">
    <property type="entry name" value="NADH_UbQ_OxRdtase_CS"/>
</dbReference>
<dbReference type="NCBIfam" id="NF009141">
    <property type="entry name" value="PRK12494.1"/>
    <property type="match status" value="1"/>
</dbReference>
<dbReference type="PANTHER" id="PTHR10884:SF14">
    <property type="entry name" value="NADH DEHYDROGENASE [UBIQUINONE] IRON-SULFUR PROTEIN 3, MITOCHONDRIAL"/>
    <property type="match status" value="1"/>
</dbReference>
<dbReference type="PANTHER" id="PTHR10884">
    <property type="entry name" value="NADH DEHYDROGENASE UBIQUINONE IRON-SULFUR PROTEIN 3"/>
    <property type="match status" value="1"/>
</dbReference>
<dbReference type="Pfam" id="PF00329">
    <property type="entry name" value="Complex1_30kDa"/>
    <property type="match status" value="1"/>
</dbReference>
<dbReference type="SUPFAM" id="SSF143243">
    <property type="entry name" value="Nqo5-like"/>
    <property type="match status" value="1"/>
</dbReference>
<dbReference type="PROSITE" id="PS00542">
    <property type="entry name" value="COMPLEX1_30K"/>
    <property type="match status" value="1"/>
</dbReference>
<reference key="1">
    <citation type="submission" date="2005-07" db="EMBL/GenBank/DDBJ databases">
        <title>Complete sequence of Synechococcus sp. CC9605.</title>
        <authorList>
            <consortium name="US DOE Joint Genome Institute"/>
            <person name="Copeland A."/>
            <person name="Lucas S."/>
            <person name="Lapidus A."/>
            <person name="Barry K."/>
            <person name="Detter J.C."/>
            <person name="Glavina T."/>
            <person name="Hammon N."/>
            <person name="Israni S."/>
            <person name="Pitluck S."/>
            <person name="Schmutz J."/>
            <person name="Martinez M."/>
            <person name="Larimer F."/>
            <person name="Land M."/>
            <person name="Kyrpides N."/>
            <person name="Ivanova N."/>
            <person name="Richardson P."/>
        </authorList>
    </citation>
    <scope>NUCLEOTIDE SEQUENCE [LARGE SCALE GENOMIC DNA]</scope>
    <source>
        <strain>CC9605</strain>
    </source>
</reference>
<gene>
    <name evidence="1" type="primary">ndhJ</name>
    <name type="ordered locus">Syncc9605_0205</name>
</gene>
<proteinExistence type="inferred from homology"/>
<accession>Q3AN51</accession>